<comment type="similarity">
    <text evidence="1">Belongs to the UPF0223 family.</text>
</comment>
<protein>
    <recommendedName>
        <fullName evidence="1">UPF0223 protein SUB0967</fullName>
    </recommendedName>
</protein>
<organism>
    <name type="scientific">Streptococcus uberis (strain ATCC BAA-854 / 0140J)</name>
    <dbReference type="NCBI Taxonomy" id="218495"/>
    <lineage>
        <taxon>Bacteria</taxon>
        <taxon>Bacillati</taxon>
        <taxon>Bacillota</taxon>
        <taxon>Bacilli</taxon>
        <taxon>Lactobacillales</taxon>
        <taxon>Streptococcaceae</taxon>
        <taxon>Streptococcus</taxon>
    </lineage>
</organism>
<proteinExistence type="inferred from homology"/>
<gene>
    <name type="ordered locus">SUB0967</name>
</gene>
<accession>B9DUE6</accession>
<dbReference type="EMBL" id="AM946015">
    <property type="protein sequence ID" value="CAR42154.1"/>
    <property type="molecule type" value="Genomic_DNA"/>
</dbReference>
<dbReference type="RefSeq" id="WP_012658466.1">
    <property type="nucleotide sequence ID" value="NC_012004.1"/>
</dbReference>
<dbReference type="SMR" id="B9DUE6"/>
<dbReference type="STRING" id="218495.SUB0967"/>
<dbReference type="KEGG" id="sub:SUB0967"/>
<dbReference type="eggNOG" id="COG4476">
    <property type="taxonomic scope" value="Bacteria"/>
</dbReference>
<dbReference type="HOGENOM" id="CLU_166693_0_0_9"/>
<dbReference type="OrthoDB" id="1649074at2"/>
<dbReference type="Proteomes" id="UP000000449">
    <property type="component" value="Chromosome"/>
</dbReference>
<dbReference type="Gene3D" id="1.10.220.80">
    <property type="entry name" value="BH2638-like"/>
    <property type="match status" value="1"/>
</dbReference>
<dbReference type="HAMAP" id="MF_01041">
    <property type="entry name" value="UPF0223"/>
    <property type="match status" value="1"/>
</dbReference>
<dbReference type="InterPro" id="IPR023324">
    <property type="entry name" value="BH2638-like_sf"/>
</dbReference>
<dbReference type="InterPro" id="IPR007920">
    <property type="entry name" value="UPF0223"/>
</dbReference>
<dbReference type="NCBIfam" id="NF003353">
    <property type="entry name" value="PRK04387.1"/>
    <property type="match status" value="1"/>
</dbReference>
<dbReference type="Pfam" id="PF05256">
    <property type="entry name" value="UPF0223"/>
    <property type="match status" value="1"/>
</dbReference>
<dbReference type="PIRSF" id="PIRSF037260">
    <property type="entry name" value="UPF0223"/>
    <property type="match status" value="1"/>
</dbReference>
<dbReference type="SUPFAM" id="SSF158504">
    <property type="entry name" value="BH2638-like"/>
    <property type="match status" value="1"/>
</dbReference>
<keyword id="KW-1185">Reference proteome</keyword>
<sequence>MSDNYNYPLDINWSTDEITSVLHFLNQVEKAYESKVDANQLLESYRVFKEIVTSKSQEKQIDREFEKSSGYSTYRAVQKAKEVEKGYFSLGR</sequence>
<name>Y967_STRU0</name>
<reference key="1">
    <citation type="journal article" date="2009" name="BMC Genomics">
        <title>Evidence for niche adaptation in the genome of the bovine pathogen Streptococcus uberis.</title>
        <authorList>
            <person name="Ward P.N."/>
            <person name="Holden M.T.G."/>
            <person name="Leigh J.A."/>
            <person name="Lennard N."/>
            <person name="Bignell A."/>
            <person name="Barron A."/>
            <person name="Clark L."/>
            <person name="Quail M.A."/>
            <person name="Woodward J."/>
            <person name="Barrell B.G."/>
            <person name="Egan S.A."/>
            <person name="Field T.R."/>
            <person name="Maskell D."/>
            <person name="Kehoe M."/>
            <person name="Dowson C.G."/>
            <person name="Chanter N."/>
            <person name="Whatmore A.M."/>
            <person name="Bentley S.D."/>
            <person name="Parkhill J."/>
        </authorList>
    </citation>
    <scope>NUCLEOTIDE SEQUENCE [LARGE SCALE GENOMIC DNA]</scope>
    <source>
        <strain>ATCC BAA-854 / 0140J</strain>
    </source>
</reference>
<evidence type="ECO:0000255" key="1">
    <source>
        <dbReference type="HAMAP-Rule" id="MF_01041"/>
    </source>
</evidence>
<feature type="chain" id="PRO_1000149548" description="UPF0223 protein SUB0967">
    <location>
        <begin position="1"/>
        <end position="92"/>
    </location>
</feature>